<organism>
    <name type="scientific">Gallus gallus</name>
    <name type="common">Chicken</name>
    <dbReference type="NCBI Taxonomy" id="9031"/>
    <lineage>
        <taxon>Eukaryota</taxon>
        <taxon>Metazoa</taxon>
        <taxon>Chordata</taxon>
        <taxon>Craniata</taxon>
        <taxon>Vertebrata</taxon>
        <taxon>Euteleostomi</taxon>
        <taxon>Archelosauria</taxon>
        <taxon>Archosauria</taxon>
        <taxon>Dinosauria</taxon>
        <taxon>Saurischia</taxon>
        <taxon>Theropoda</taxon>
        <taxon>Coelurosauria</taxon>
        <taxon>Aves</taxon>
        <taxon>Neognathae</taxon>
        <taxon>Galloanserae</taxon>
        <taxon>Galliformes</taxon>
        <taxon>Phasianidae</taxon>
        <taxon>Phasianinae</taxon>
        <taxon>Gallus</taxon>
    </lineage>
</organism>
<proteinExistence type="evidence at transcript level"/>
<reference key="1">
    <citation type="journal article" date="2005" name="Genome Biol.">
        <title>Full-length cDNAs from chicken bursal lymphocytes to facilitate gene function analysis.</title>
        <authorList>
            <person name="Caldwell R.B."/>
            <person name="Kierzek A.M."/>
            <person name="Arakawa H."/>
            <person name="Bezzubov Y."/>
            <person name="Zaim J."/>
            <person name="Fiedler P."/>
            <person name="Kutter S."/>
            <person name="Blagodatski A."/>
            <person name="Kostovska D."/>
            <person name="Koter M."/>
            <person name="Plachy J."/>
            <person name="Carninci P."/>
            <person name="Hayashizaki Y."/>
            <person name="Buerstedde J.-M."/>
        </authorList>
    </citation>
    <scope>NUCLEOTIDE SEQUENCE [LARGE SCALE MRNA]</scope>
    <source>
        <strain>CB</strain>
        <tissue>Bursa of Fabricius</tissue>
    </source>
</reference>
<protein>
    <recommendedName>
        <fullName>Histone-lysine N-methyltransferase SETD1B</fullName>
        <ecNumber evidence="3">2.1.1.354</ecNumber>
    </recommendedName>
    <alternativeName>
        <fullName>SET domain-containing protein 1B</fullName>
    </alternativeName>
</protein>
<sequence>MSFREIKAGEKAKHPEDHGKKQSSSWINGMENSTQASTSVEKRNHHWRSYKLIIDPALKKGQHKLYRYDGQHFSMPNSGIAPVDCVRDPRIGRIWTKTKELELSVPKFKIDEFYVGPVPPKQVTFAKLNDNIRENFLTDMCKKYGEVEEVEILYNPKNKKHLGIAKVIFATVKGAREAVQHLHNTSVMGNIIHVELDTKGETRMRFYELLVNGLYTPQTLPVGTEQDASPTVNETLQLTDSLKRLKDSNLSSVGSSVTPNSSTPFSHDTAYSSCRQDTPNSFSQFTPQSQGTPHTPRLGTPFSQDSTYSSRQTTPVYHFGQDSGYKHRRHETKFTDAYNRRPGGHHYVHNSPGVFRGTEHQFSTFKSHQQEPVQFSHTPPLSHSSSSSYKSAFSPYQAPAVFPQSEEQPFAQTSREAEYRRPAPPPAEMVVESSAATSADFAPVKEKPEEPPPLPDSNSAPEPSAPSFSQTPERSETPGTPTMESEMQHNSLDSRIEMLLKEQRTKLPFLNEHDSDNEVRMEGSPISSSSSQLSPIPMYGSNSQPGYRAQTPSSRPSSTGLEDISPTPLPDSDDDEPIPGTASLNQNSRGTSEASMTPIDQLNRASKVETLEVKEMVPGDQTPTSEKMDESQHSSGEDMEISDDEMNSAPITSAECAKTIVVNSSVSNAAVMAPSIPPLPPPPGFPPLPPPPPPPPQPAFPMPPPLPPPPPPTHPAVTVPPPPLPAPPGVPPPHILPPLPPFHPGMFPVMQVDMISVLGNHWGGMPMSFQMQTQMLSRMMQAQNTYQYPPFMGGRMQFVNLPPYRPFSMGAARGRGQQWPPLPKFDPSVPPPGYEPKKEDPHKATVDGVLLVIVKELKAIMKRDLNRKMVEVVAFRAFDDWWDKKERLAKASLTPVKSGGELEEKPKPKDRITSCLLENWNKGEGLGYEGIGLGIGLRGAIRLPSFKVKRKEPPEAASAGDQKRIRPSTSVDDEDEESERDRDASDTTSDLSKKDAEAVGLRRRPARPLELDSEGEEGDETSGKEEESSSEKEEEQEEEGGLVKAAPGKEEEEDEDDEEDEDDDEDEEDEEDYEETGVETSDKEEEQDSEEEDAASPSSSKAEVESSDESEDSSEFESSSDSDEDDDEEEEEEEDEEEEEEEEVAEDQDREAMVAETEHEPASHELPDDKRETILELYPVDYMDATGLGLSEPALVEKDEGMEEVKAEESECDQVPEESIAAETLKQLVMERDQETKLALSPICRPVEEPEPIVMLEPEVQECPKPESQDEAGTVCLSTPVAVFGEARPSKSSFFSKSDDSCLETHVKTKLPSAVEEEDRLPRTPGREVVVHSETDILLLPAHKVPSSTVPLPSTPGKEESVVPPEKFPEQLMVTKTSIEEEIPRTPGRDILAKSSHPLGKSQSTDTVPATPGSDAPLTGSSLTLSSPQVPGSPFSYPSQSPGINSGIPRTPGRDFNFTPTFPEAGATIPCLLSGKKQSEDDLDEKPFKEPLGASLTISMNSVPSPIPFASPTQADFRTDMGLPPNEPIPIAALPCIPGDGRMPIEECKAEVKSVLLSPEAPVGASILPPPPPHSVLPKRRPGRPRRSPPSVLSLDMYSGKTIEPPPVPVALVESAMSKELLSAHPDAFYGLKDPEAVTLDFRNDSFHEKIAAETVAEKLPFKELENQWNEDFKEEEAHAKPKRQWRRQKKSPEHLPVIPSPEYSPPQPQFRPRSEFEEMTILYDIWNGGIDEEDIKFMCITYDRLLQQDNGMDWLNDTLWVFHPSTSFSTPKKKKRDDGMREHVTGCARSEGYYKIDKKDKLKYLNNSRAFAEEPPADTQGMSIPAQPHASTRAGSERRSEQRRLLSSFTGSCDSDLLKFNQLKFRKKKLKFCKSHIHDWGLFAMEPIAADEMVIEYVGQNIRQVIADMREKRYEDEGIGSSYMFRVDHDTIIDATKCGNFARFINHSCNPNCYAKVITVESQKKIVIYSKQHINVNEEITYDYKFPIEDVKIPCLCGSENCRGTLN</sequence>
<keyword id="KW-0010">Activator</keyword>
<keyword id="KW-0156">Chromatin regulator</keyword>
<keyword id="KW-0158">Chromosome</keyword>
<keyword id="KW-0489">Methyltransferase</keyword>
<keyword id="KW-0539">Nucleus</keyword>
<keyword id="KW-1185">Reference proteome</keyword>
<keyword id="KW-0694">RNA-binding</keyword>
<keyword id="KW-0949">S-adenosyl-L-methionine</keyword>
<keyword id="KW-0804">Transcription</keyword>
<keyword id="KW-0805">Transcription regulation</keyword>
<keyword id="KW-0808">Transferase</keyword>
<gene>
    <name type="primary">SETD1B</name>
    <name type="ORF">RCJMB04_10j6</name>
</gene>
<evidence type="ECO:0000250" key="1">
    <source>
        <dbReference type="UniProtKB" id="O15047"/>
    </source>
</evidence>
<evidence type="ECO:0000250" key="2">
    <source>
        <dbReference type="UniProtKB" id="P38827"/>
    </source>
</evidence>
<evidence type="ECO:0000250" key="3">
    <source>
        <dbReference type="UniProtKB" id="Q9UPS6"/>
    </source>
</evidence>
<evidence type="ECO:0000255" key="4">
    <source>
        <dbReference type="PROSITE-ProRule" id="PRU00155"/>
    </source>
</evidence>
<evidence type="ECO:0000255" key="5">
    <source>
        <dbReference type="PROSITE-ProRule" id="PRU00176"/>
    </source>
</evidence>
<evidence type="ECO:0000255" key="6">
    <source>
        <dbReference type="PROSITE-ProRule" id="PRU00190"/>
    </source>
</evidence>
<evidence type="ECO:0000256" key="7">
    <source>
        <dbReference type="SAM" id="MobiDB-lite"/>
    </source>
</evidence>
<name>SET1B_CHICK</name>
<comment type="function">
    <text evidence="1">Histone methyltransferase that specifically methylates 'Lys-4' of histone H3, when part of the SET1 histone methyltransferase (HMT) complex, but not if the neighboring 'Lys-9' residue is already methylated. H3 'Lys-4' methylation represents a specific tag for epigenetic transcriptional activation.</text>
</comment>
<comment type="catalytic activity">
    <reaction evidence="3">
        <text>L-lysyl(4)-[histone H3] + 3 S-adenosyl-L-methionine = N(6),N(6),N(6)-trimethyl-L-lysyl(4)-[histone H3] + 3 S-adenosyl-L-homocysteine + 3 H(+)</text>
        <dbReference type="Rhea" id="RHEA:60260"/>
        <dbReference type="Rhea" id="RHEA-COMP:15537"/>
        <dbReference type="Rhea" id="RHEA-COMP:15547"/>
        <dbReference type="ChEBI" id="CHEBI:15378"/>
        <dbReference type="ChEBI" id="CHEBI:29969"/>
        <dbReference type="ChEBI" id="CHEBI:57856"/>
        <dbReference type="ChEBI" id="CHEBI:59789"/>
        <dbReference type="ChEBI" id="CHEBI:61961"/>
        <dbReference type="EC" id="2.1.1.354"/>
    </reaction>
</comment>
<comment type="subunit">
    <text evidence="3">Component of the SET1B/COMPASS complex.</text>
</comment>
<comment type="subcellular location">
    <subcellularLocation>
        <location evidence="3">Nucleus speckle</location>
    </subcellularLocation>
    <subcellularLocation>
        <location evidence="3">Chromosome</location>
    </subcellularLocation>
</comment>
<comment type="similarity">
    <text evidence="6">Belongs to the class V-like SAM-binding methyltransferase superfamily.</text>
</comment>
<accession>Q5F3P8</accession>
<dbReference type="EC" id="2.1.1.354" evidence="3"/>
<dbReference type="EMBL" id="AJ851602">
    <property type="protein sequence ID" value="CAH65236.1"/>
    <property type="molecule type" value="mRNA"/>
</dbReference>
<dbReference type="RefSeq" id="NP_001025832.1">
    <property type="nucleotide sequence ID" value="NM_001030661.1"/>
</dbReference>
<dbReference type="SMR" id="Q5F3P8"/>
<dbReference type="FunCoup" id="Q5F3P8">
    <property type="interactions" value="1086"/>
</dbReference>
<dbReference type="STRING" id="9031.ENSGALP00000038427"/>
<dbReference type="GlyGen" id="Q5F3P8">
    <property type="glycosylation" value="4 sites"/>
</dbReference>
<dbReference type="PaxDb" id="9031-ENSGALP00000038427"/>
<dbReference type="GeneID" id="416851"/>
<dbReference type="KEGG" id="gga:416851"/>
<dbReference type="CTD" id="9739"/>
<dbReference type="VEuPathDB" id="HostDB:geneid_416851"/>
<dbReference type="eggNOG" id="KOG1080">
    <property type="taxonomic scope" value="Eukaryota"/>
</dbReference>
<dbReference type="InParanoid" id="Q5F3P8"/>
<dbReference type="OMA" id="LPCMHGD"/>
<dbReference type="OrthoDB" id="308383at2759"/>
<dbReference type="PhylomeDB" id="Q5F3P8"/>
<dbReference type="PRO" id="PR:Q5F3P8"/>
<dbReference type="Proteomes" id="UP000000539">
    <property type="component" value="Unassembled WGS sequence"/>
</dbReference>
<dbReference type="GO" id="GO:0005694">
    <property type="term" value="C:chromosome"/>
    <property type="evidence" value="ECO:0007669"/>
    <property type="project" value="UniProtKB-SubCell"/>
</dbReference>
<dbReference type="GO" id="GO:0005737">
    <property type="term" value="C:cytoplasm"/>
    <property type="evidence" value="ECO:0000250"/>
    <property type="project" value="UniProtKB"/>
</dbReference>
<dbReference type="GO" id="GO:0016607">
    <property type="term" value="C:nuclear speck"/>
    <property type="evidence" value="ECO:0007669"/>
    <property type="project" value="UniProtKB-SubCell"/>
</dbReference>
<dbReference type="GO" id="GO:0005634">
    <property type="term" value="C:nucleus"/>
    <property type="evidence" value="ECO:0000250"/>
    <property type="project" value="UniProtKB"/>
</dbReference>
<dbReference type="GO" id="GO:0048188">
    <property type="term" value="C:Set1C/COMPASS complex"/>
    <property type="evidence" value="ECO:0000318"/>
    <property type="project" value="GO_Central"/>
</dbReference>
<dbReference type="GO" id="GO:0042800">
    <property type="term" value="F:histone H3K4 methyltransferase activity"/>
    <property type="evidence" value="ECO:0000318"/>
    <property type="project" value="GO_Central"/>
</dbReference>
<dbReference type="GO" id="GO:0140999">
    <property type="term" value="F:histone H3K4 trimethyltransferase activity"/>
    <property type="evidence" value="ECO:0007669"/>
    <property type="project" value="UniProtKB-EC"/>
</dbReference>
<dbReference type="GO" id="GO:0003723">
    <property type="term" value="F:RNA binding"/>
    <property type="evidence" value="ECO:0007669"/>
    <property type="project" value="UniProtKB-KW"/>
</dbReference>
<dbReference type="GO" id="GO:0032259">
    <property type="term" value="P:methylation"/>
    <property type="evidence" value="ECO:0007669"/>
    <property type="project" value="UniProtKB-KW"/>
</dbReference>
<dbReference type="CDD" id="cd12549">
    <property type="entry name" value="RRM_Set1B"/>
    <property type="match status" value="1"/>
</dbReference>
<dbReference type="CDD" id="cd19169">
    <property type="entry name" value="SET_SETD1"/>
    <property type="match status" value="1"/>
</dbReference>
<dbReference type="FunFam" id="2.170.270.10:FF:000010">
    <property type="entry name" value="Histone-lysine N-methyltransferase"/>
    <property type="match status" value="1"/>
</dbReference>
<dbReference type="FunFam" id="3.30.70.330:FF:000178">
    <property type="entry name" value="Histone-lysine N-methyltransferase"/>
    <property type="match status" value="1"/>
</dbReference>
<dbReference type="Gene3D" id="3.30.70.330">
    <property type="match status" value="1"/>
</dbReference>
<dbReference type="Gene3D" id="2.170.270.10">
    <property type="entry name" value="SET domain"/>
    <property type="match status" value="1"/>
</dbReference>
<dbReference type="InterPro" id="IPR024657">
    <property type="entry name" value="COMPASS_Set1_N-SET"/>
</dbReference>
<dbReference type="InterPro" id="IPR012677">
    <property type="entry name" value="Nucleotide-bd_a/b_plait_sf"/>
</dbReference>
<dbReference type="InterPro" id="IPR003616">
    <property type="entry name" value="Post-SET_dom"/>
</dbReference>
<dbReference type="InterPro" id="IPR035979">
    <property type="entry name" value="RBD_domain_sf"/>
</dbReference>
<dbReference type="InterPro" id="IPR000504">
    <property type="entry name" value="RRM_dom"/>
</dbReference>
<dbReference type="InterPro" id="IPR044570">
    <property type="entry name" value="Set1-like"/>
</dbReference>
<dbReference type="InterPro" id="IPR034468">
    <property type="entry name" value="Set1B_RRM"/>
</dbReference>
<dbReference type="InterPro" id="IPR001214">
    <property type="entry name" value="SET_dom"/>
</dbReference>
<dbReference type="InterPro" id="IPR046341">
    <property type="entry name" value="SET_dom_sf"/>
</dbReference>
<dbReference type="InterPro" id="IPR037841">
    <property type="entry name" value="SET_SETD1A/B"/>
</dbReference>
<dbReference type="PANTHER" id="PTHR45814">
    <property type="entry name" value="HISTONE-LYSINE N-METHYLTRANSFERASE SETD1"/>
    <property type="match status" value="1"/>
</dbReference>
<dbReference type="PANTHER" id="PTHR45814:SF1">
    <property type="entry name" value="HISTONE-LYSINE N-METHYLTRANSFERASE SETD1B"/>
    <property type="match status" value="1"/>
</dbReference>
<dbReference type="Pfam" id="PF11764">
    <property type="entry name" value="N-SET"/>
    <property type="match status" value="1"/>
</dbReference>
<dbReference type="Pfam" id="PF00076">
    <property type="entry name" value="RRM_1"/>
    <property type="match status" value="1"/>
</dbReference>
<dbReference type="Pfam" id="PF00856">
    <property type="entry name" value="SET"/>
    <property type="match status" value="1"/>
</dbReference>
<dbReference type="SMART" id="SM01291">
    <property type="entry name" value="N-SET"/>
    <property type="match status" value="1"/>
</dbReference>
<dbReference type="SMART" id="SM00508">
    <property type="entry name" value="PostSET"/>
    <property type="match status" value="1"/>
</dbReference>
<dbReference type="SMART" id="SM00360">
    <property type="entry name" value="RRM"/>
    <property type="match status" value="1"/>
</dbReference>
<dbReference type="SMART" id="SM00317">
    <property type="entry name" value="SET"/>
    <property type="match status" value="1"/>
</dbReference>
<dbReference type="SUPFAM" id="SSF54928">
    <property type="entry name" value="RNA-binding domain, RBD"/>
    <property type="match status" value="1"/>
</dbReference>
<dbReference type="SUPFAM" id="SSF82199">
    <property type="entry name" value="SET domain"/>
    <property type="match status" value="1"/>
</dbReference>
<dbReference type="PROSITE" id="PS50868">
    <property type="entry name" value="POST_SET"/>
    <property type="match status" value="1"/>
</dbReference>
<dbReference type="PROSITE" id="PS50102">
    <property type="entry name" value="RRM"/>
    <property type="match status" value="1"/>
</dbReference>
<dbReference type="PROSITE" id="PS50280">
    <property type="entry name" value="SET"/>
    <property type="match status" value="1"/>
</dbReference>
<feature type="chain" id="PRO_0000316995" description="Histone-lysine N-methyltransferase SETD1B">
    <location>
        <begin position="1"/>
        <end position="2008"/>
    </location>
</feature>
<feature type="domain" description="RRM" evidence="5">
    <location>
        <begin position="111"/>
        <end position="199"/>
    </location>
</feature>
<feature type="domain" description="SET" evidence="6">
    <location>
        <begin position="1869"/>
        <end position="1986"/>
    </location>
</feature>
<feature type="domain" description="Post-SET" evidence="4">
    <location>
        <begin position="1992"/>
        <end position="2008"/>
    </location>
</feature>
<feature type="region of interest" description="Disordered" evidence="7">
    <location>
        <begin position="1"/>
        <end position="42"/>
    </location>
</feature>
<feature type="region of interest" description="Disordered" evidence="7">
    <location>
        <begin position="249"/>
        <end position="390"/>
    </location>
</feature>
<feature type="region of interest" description="Disordered" evidence="7">
    <location>
        <begin position="402"/>
        <end position="652"/>
    </location>
</feature>
<feature type="region of interest" description="Disordered" evidence="7">
    <location>
        <begin position="682"/>
        <end position="725"/>
    </location>
</feature>
<feature type="region of interest" description="Disordered" evidence="7">
    <location>
        <begin position="950"/>
        <end position="1172"/>
    </location>
</feature>
<feature type="region of interest" description="Disordered" evidence="7">
    <location>
        <begin position="1309"/>
        <end position="1328"/>
    </location>
</feature>
<feature type="region of interest" description="Disordered" evidence="7">
    <location>
        <begin position="1345"/>
        <end position="1461"/>
    </location>
</feature>
<feature type="region of interest" description="Disordered" evidence="7">
    <location>
        <begin position="1563"/>
        <end position="1600"/>
    </location>
</feature>
<feature type="region of interest" description="Disordered" evidence="7">
    <location>
        <begin position="1674"/>
        <end position="1712"/>
    </location>
</feature>
<feature type="region of interest" description="Disordered" evidence="7">
    <location>
        <begin position="1814"/>
        <end position="1842"/>
    </location>
</feature>
<feature type="short sequence motif" description="RxxxRR motif" evidence="2">
    <location>
        <begin position="1840"/>
        <end position="1845"/>
    </location>
</feature>
<feature type="compositionally biased region" description="Basic and acidic residues" evidence="7">
    <location>
        <begin position="1"/>
        <end position="20"/>
    </location>
</feature>
<feature type="compositionally biased region" description="Polar residues" evidence="7">
    <location>
        <begin position="22"/>
        <end position="39"/>
    </location>
</feature>
<feature type="compositionally biased region" description="Low complexity" evidence="7">
    <location>
        <begin position="251"/>
        <end position="264"/>
    </location>
</feature>
<feature type="compositionally biased region" description="Polar residues" evidence="7">
    <location>
        <begin position="265"/>
        <end position="293"/>
    </location>
</feature>
<feature type="compositionally biased region" description="Polar residues" evidence="7">
    <location>
        <begin position="301"/>
        <end position="315"/>
    </location>
</feature>
<feature type="compositionally biased region" description="Polar residues" evidence="7">
    <location>
        <begin position="360"/>
        <end position="381"/>
    </location>
</feature>
<feature type="compositionally biased region" description="Polar residues" evidence="7">
    <location>
        <begin position="405"/>
        <end position="414"/>
    </location>
</feature>
<feature type="compositionally biased region" description="Polar residues" evidence="7">
    <location>
        <begin position="456"/>
        <end position="491"/>
    </location>
</feature>
<feature type="compositionally biased region" description="Basic and acidic residues" evidence="7">
    <location>
        <begin position="492"/>
        <end position="521"/>
    </location>
</feature>
<feature type="compositionally biased region" description="Low complexity" evidence="7">
    <location>
        <begin position="524"/>
        <end position="537"/>
    </location>
</feature>
<feature type="compositionally biased region" description="Polar residues" evidence="7">
    <location>
        <begin position="540"/>
        <end position="560"/>
    </location>
</feature>
<feature type="compositionally biased region" description="Polar residues" evidence="7">
    <location>
        <begin position="582"/>
        <end position="604"/>
    </location>
</feature>
<feature type="compositionally biased region" description="Basic and acidic residues" evidence="7">
    <location>
        <begin position="606"/>
        <end position="617"/>
    </location>
</feature>
<feature type="compositionally biased region" description="Basic and acidic residues" evidence="7">
    <location>
        <begin position="626"/>
        <end position="636"/>
    </location>
</feature>
<feature type="compositionally biased region" description="Acidic residues" evidence="7">
    <location>
        <begin position="637"/>
        <end position="646"/>
    </location>
</feature>
<feature type="compositionally biased region" description="Basic and acidic residues" evidence="7">
    <location>
        <begin position="979"/>
        <end position="997"/>
    </location>
</feature>
<feature type="compositionally biased region" description="Acidic residues" evidence="7">
    <location>
        <begin position="1011"/>
        <end position="1020"/>
    </location>
</feature>
<feature type="compositionally biased region" description="Basic and acidic residues" evidence="7">
    <location>
        <begin position="1021"/>
        <end position="1031"/>
    </location>
</feature>
<feature type="compositionally biased region" description="Acidic residues" evidence="7">
    <location>
        <begin position="1050"/>
        <end position="1094"/>
    </location>
</feature>
<feature type="compositionally biased region" description="Acidic residues" evidence="7">
    <location>
        <begin position="1105"/>
        <end position="1149"/>
    </location>
</feature>
<feature type="compositionally biased region" description="Basic and acidic residues" evidence="7">
    <location>
        <begin position="1150"/>
        <end position="1172"/>
    </location>
</feature>
<feature type="compositionally biased region" description="Low complexity" evidence="7">
    <location>
        <begin position="1345"/>
        <end position="1356"/>
    </location>
</feature>
<feature type="compositionally biased region" description="Basic and acidic residues" evidence="7">
    <location>
        <begin position="1378"/>
        <end position="1392"/>
    </location>
</feature>
<feature type="compositionally biased region" description="Low complexity" evidence="7">
    <location>
        <begin position="1418"/>
        <end position="1427"/>
    </location>
</feature>
<feature type="compositionally biased region" description="Basic residues" evidence="7">
    <location>
        <begin position="1577"/>
        <end position="1587"/>
    </location>
</feature>
<feature type="compositionally biased region" description="Basic residues" evidence="7">
    <location>
        <begin position="1681"/>
        <end position="1690"/>
    </location>
</feature>
<feature type="compositionally biased region" description="Pro residues" evidence="7">
    <location>
        <begin position="1699"/>
        <end position="1710"/>
    </location>
</feature>
<feature type="binding site" evidence="6">
    <location>
        <position position="1985"/>
    </location>
    <ligand>
        <name>S-adenosyl-L-methionine</name>
        <dbReference type="ChEBI" id="CHEBI:59789"/>
    </ligand>
</feature>